<reference key="1">
    <citation type="submission" date="2003-01" db="EMBL/GenBank/DDBJ databases">
        <title>Chloroplast DNA phylogeny of tribe Heliantheae (Asteraceae).</title>
        <authorList>
            <person name="Panero J.L."/>
            <person name="Baldwin B.G."/>
            <person name="Schilling E.E."/>
            <person name="Clevinger J.A."/>
        </authorList>
    </citation>
    <scope>NUCLEOTIDE SEQUENCE [GENOMIC DNA]</scope>
</reference>
<sequence length="166" mass="19487">MFPMVTEFMNYGQQTVRAARYIGQGFMITLSHANRLPVTIQYPYEKLIISERFRGRIHFEFDKCIACEVCVRVCPIDLPVVDWKLETDIRKKRLLNYSIDFGICIFCGNCVEYCPTNCLSMTEEYELSTYDRHELNYNQIALGRLPMSIIDDYTIRTILNLPEIKT</sequence>
<accession>Q8HVU7</accession>
<gene>
    <name evidence="1" type="primary">ndhI</name>
</gene>
<comment type="function">
    <text evidence="1">NDH shuttles electrons from NAD(P)H:plastoquinone, via FMN and iron-sulfur (Fe-S) centers, to quinones in the photosynthetic chain and possibly in a chloroplast respiratory chain. The immediate electron acceptor for the enzyme in this species is believed to be plastoquinone. Couples the redox reaction to proton translocation, and thus conserves the redox energy in a proton gradient.</text>
</comment>
<comment type="catalytic activity">
    <reaction evidence="1">
        <text>a plastoquinone + NADH + (n+1) H(+)(in) = a plastoquinol + NAD(+) + n H(+)(out)</text>
        <dbReference type="Rhea" id="RHEA:42608"/>
        <dbReference type="Rhea" id="RHEA-COMP:9561"/>
        <dbReference type="Rhea" id="RHEA-COMP:9562"/>
        <dbReference type="ChEBI" id="CHEBI:15378"/>
        <dbReference type="ChEBI" id="CHEBI:17757"/>
        <dbReference type="ChEBI" id="CHEBI:57540"/>
        <dbReference type="ChEBI" id="CHEBI:57945"/>
        <dbReference type="ChEBI" id="CHEBI:62192"/>
    </reaction>
</comment>
<comment type="catalytic activity">
    <reaction evidence="1">
        <text>a plastoquinone + NADPH + (n+1) H(+)(in) = a plastoquinol + NADP(+) + n H(+)(out)</text>
        <dbReference type="Rhea" id="RHEA:42612"/>
        <dbReference type="Rhea" id="RHEA-COMP:9561"/>
        <dbReference type="Rhea" id="RHEA-COMP:9562"/>
        <dbReference type="ChEBI" id="CHEBI:15378"/>
        <dbReference type="ChEBI" id="CHEBI:17757"/>
        <dbReference type="ChEBI" id="CHEBI:57783"/>
        <dbReference type="ChEBI" id="CHEBI:58349"/>
        <dbReference type="ChEBI" id="CHEBI:62192"/>
    </reaction>
</comment>
<comment type="cofactor">
    <cofactor evidence="1">
        <name>[4Fe-4S] cluster</name>
        <dbReference type="ChEBI" id="CHEBI:49883"/>
    </cofactor>
    <text evidence="1">Binds 2 [4Fe-4S] clusters per subunit.</text>
</comment>
<comment type="subunit">
    <text evidence="1">NDH is composed of at least 16 different subunits, 5 of which are encoded in the nucleus.</text>
</comment>
<comment type="subcellular location">
    <subcellularLocation>
        <location evidence="1">Plastid</location>
        <location evidence="1">Chloroplast thylakoid membrane</location>
        <topology evidence="1">Peripheral membrane protein</topology>
    </subcellularLocation>
</comment>
<comment type="similarity">
    <text evidence="1">Belongs to the complex I 23 kDa subunit family.</text>
</comment>
<feature type="chain" id="PRO_0000250765" description="NAD(P)H-quinone oxidoreductase subunit I, chloroplastic">
    <location>
        <begin position="1"/>
        <end position="166"/>
    </location>
</feature>
<feature type="domain" description="4Fe-4S ferredoxin-type 1" evidence="1">
    <location>
        <begin position="55"/>
        <end position="84"/>
    </location>
</feature>
<feature type="domain" description="4Fe-4S ferredoxin-type 2" evidence="1">
    <location>
        <begin position="95"/>
        <end position="124"/>
    </location>
</feature>
<feature type="binding site" evidence="1">
    <location>
        <position position="64"/>
    </location>
    <ligand>
        <name>[4Fe-4S] cluster</name>
        <dbReference type="ChEBI" id="CHEBI:49883"/>
        <label>1</label>
    </ligand>
</feature>
<feature type="binding site" evidence="1">
    <location>
        <position position="67"/>
    </location>
    <ligand>
        <name>[4Fe-4S] cluster</name>
        <dbReference type="ChEBI" id="CHEBI:49883"/>
        <label>1</label>
    </ligand>
</feature>
<feature type="binding site" evidence="1">
    <location>
        <position position="70"/>
    </location>
    <ligand>
        <name>[4Fe-4S] cluster</name>
        <dbReference type="ChEBI" id="CHEBI:49883"/>
        <label>1</label>
    </ligand>
</feature>
<feature type="binding site" evidence="1">
    <location>
        <position position="74"/>
    </location>
    <ligand>
        <name>[4Fe-4S] cluster</name>
        <dbReference type="ChEBI" id="CHEBI:49883"/>
        <label>2</label>
    </ligand>
</feature>
<feature type="binding site" evidence="1">
    <location>
        <position position="104"/>
    </location>
    <ligand>
        <name>[4Fe-4S] cluster</name>
        <dbReference type="ChEBI" id="CHEBI:49883"/>
        <label>2</label>
    </ligand>
</feature>
<feature type="binding site" evidence="1">
    <location>
        <position position="107"/>
    </location>
    <ligand>
        <name>[4Fe-4S] cluster</name>
        <dbReference type="ChEBI" id="CHEBI:49883"/>
        <label>2</label>
    </ligand>
</feature>
<feature type="binding site" evidence="1">
    <location>
        <position position="110"/>
    </location>
    <ligand>
        <name>[4Fe-4S] cluster</name>
        <dbReference type="ChEBI" id="CHEBI:49883"/>
        <label>2</label>
    </ligand>
</feature>
<feature type="binding site" evidence="1">
    <location>
        <position position="114"/>
    </location>
    <ligand>
        <name>[4Fe-4S] cluster</name>
        <dbReference type="ChEBI" id="CHEBI:49883"/>
        <label>1</label>
    </ligand>
</feature>
<keyword id="KW-0004">4Fe-4S</keyword>
<keyword id="KW-0150">Chloroplast</keyword>
<keyword id="KW-0408">Iron</keyword>
<keyword id="KW-0411">Iron-sulfur</keyword>
<keyword id="KW-0472">Membrane</keyword>
<keyword id="KW-0479">Metal-binding</keyword>
<keyword id="KW-0520">NAD</keyword>
<keyword id="KW-0521">NADP</keyword>
<keyword id="KW-0934">Plastid</keyword>
<keyword id="KW-0618">Plastoquinone</keyword>
<keyword id="KW-0874">Quinone</keyword>
<keyword id="KW-0677">Repeat</keyword>
<keyword id="KW-0793">Thylakoid</keyword>
<keyword id="KW-1278">Translocase</keyword>
<name>NDHI_CHASO</name>
<dbReference type="EC" id="7.1.1.-" evidence="1"/>
<dbReference type="EMBL" id="AF383765">
    <property type="protein sequence ID" value="AAN61707.1"/>
    <property type="molecule type" value="Genomic_DNA"/>
</dbReference>
<dbReference type="SMR" id="Q8HVU7"/>
<dbReference type="GO" id="GO:0009535">
    <property type="term" value="C:chloroplast thylakoid membrane"/>
    <property type="evidence" value="ECO:0007669"/>
    <property type="project" value="UniProtKB-SubCell"/>
</dbReference>
<dbReference type="GO" id="GO:0051539">
    <property type="term" value="F:4 iron, 4 sulfur cluster binding"/>
    <property type="evidence" value="ECO:0007669"/>
    <property type="project" value="UniProtKB-KW"/>
</dbReference>
<dbReference type="GO" id="GO:0005506">
    <property type="term" value="F:iron ion binding"/>
    <property type="evidence" value="ECO:0007669"/>
    <property type="project" value="UniProtKB-UniRule"/>
</dbReference>
<dbReference type="GO" id="GO:0008137">
    <property type="term" value="F:NADH dehydrogenase (ubiquinone) activity"/>
    <property type="evidence" value="ECO:0007669"/>
    <property type="project" value="InterPro"/>
</dbReference>
<dbReference type="GO" id="GO:0048038">
    <property type="term" value="F:quinone binding"/>
    <property type="evidence" value="ECO:0007669"/>
    <property type="project" value="UniProtKB-KW"/>
</dbReference>
<dbReference type="GO" id="GO:0019684">
    <property type="term" value="P:photosynthesis, light reaction"/>
    <property type="evidence" value="ECO:0007669"/>
    <property type="project" value="UniProtKB-UniRule"/>
</dbReference>
<dbReference type="FunFam" id="3.30.70.3270:FF:000006">
    <property type="entry name" value="NAD(P)H-quinone oxidoreductase subunit I, chloroplastic"/>
    <property type="match status" value="1"/>
</dbReference>
<dbReference type="Gene3D" id="3.30.70.3270">
    <property type="match status" value="1"/>
</dbReference>
<dbReference type="HAMAP" id="MF_01351">
    <property type="entry name" value="NDH1_NuoI"/>
    <property type="match status" value="1"/>
</dbReference>
<dbReference type="InterPro" id="IPR017896">
    <property type="entry name" value="4Fe4S_Fe-S-bd"/>
</dbReference>
<dbReference type="InterPro" id="IPR017900">
    <property type="entry name" value="4Fe4S_Fe_S_CS"/>
</dbReference>
<dbReference type="InterPro" id="IPR010226">
    <property type="entry name" value="NADH_quinone_OxRdtase_chainI"/>
</dbReference>
<dbReference type="InterPro" id="IPR004497">
    <property type="entry name" value="NDHI"/>
</dbReference>
<dbReference type="NCBIfam" id="TIGR00403">
    <property type="entry name" value="ndhI"/>
    <property type="match status" value="1"/>
</dbReference>
<dbReference type="NCBIfam" id="TIGR01971">
    <property type="entry name" value="NuoI"/>
    <property type="match status" value="1"/>
</dbReference>
<dbReference type="NCBIfam" id="NF004537">
    <property type="entry name" value="PRK05888.1-3"/>
    <property type="match status" value="1"/>
</dbReference>
<dbReference type="PANTHER" id="PTHR47275">
    <property type="entry name" value="NAD(P)H-QUINONE OXIDOREDUCTASE SUBUNIT I, CHLOROPLASTIC"/>
    <property type="match status" value="1"/>
</dbReference>
<dbReference type="PANTHER" id="PTHR47275:SF1">
    <property type="entry name" value="NAD(P)H-QUINONE OXIDOREDUCTASE SUBUNIT I, CHLOROPLASTIC"/>
    <property type="match status" value="1"/>
</dbReference>
<dbReference type="Pfam" id="PF00037">
    <property type="entry name" value="Fer4"/>
    <property type="match status" value="2"/>
</dbReference>
<dbReference type="SUPFAM" id="SSF54862">
    <property type="entry name" value="4Fe-4S ferredoxins"/>
    <property type="match status" value="1"/>
</dbReference>
<dbReference type="PROSITE" id="PS00198">
    <property type="entry name" value="4FE4S_FER_1"/>
    <property type="match status" value="2"/>
</dbReference>
<dbReference type="PROSITE" id="PS51379">
    <property type="entry name" value="4FE4S_FER_2"/>
    <property type="match status" value="2"/>
</dbReference>
<organism>
    <name type="scientific">Chamaechaenactis scaposa</name>
    <name type="common">Fullstem</name>
    <dbReference type="NCBI Taxonomy" id="176524"/>
    <lineage>
        <taxon>Eukaryota</taxon>
        <taxon>Viridiplantae</taxon>
        <taxon>Streptophyta</taxon>
        <taxon>Embryophyta</taxon>
        <taxon>Tracheophyta</taxon>
        <taxon>Spermatophyta</taxon>
        <taxon>Magnoliopsida</taxon>
        <taxon>eudicotyledons</taxon>
        <taxon>Gunneridae</taxon>
        <taxon>Pentapetalae</taxon>
        <taxon>asterids</taxon>
        <taxon>campanulids</taxon>
        <taxon>Asterales</taxon>
        <taxon>Asteraceae</taxon>
        <taxon>Asteroideae</taxon>
        <taxon>Heliantheae alliance</taxon>
        <taxon>Bahieae</taxon>
        <taxon>Chamaechaenactis</taxon>
    </lineage>
</organism>
<protein>
    <recommendedName>
        <fullName evidence="1">NAD(P)H-quinone oxidoreductase subunit I, chloroplastic</fullName>
        <ecNumber evidence="1">7.1.1.-</ecNumber>
    </recommendedName>
    <alternativeName>
        <fullName evidence="1">NAD(P)H dehydrogenase subunit I</fullName>
        <shortName evidence="1">NDH subunit I</shortName>
    </alternativeName>
    <alternativeName>
        <fullName evidence="1">NADH-plastoquinone oxidoreductase subunit I</fullName>
    </alternativeName>
</protein>
<proteinExistence type="inferred from homology"/>
<evidence type="ECO:0000255" key="1">
    <source>
        <dbReference type="HAMAP-Rule" id="MF_01351"/>
    </source>
</evidence>
<geneLocation type="chloroplast"/>